<dbReference type="EMBL" id="AP010904">
    <property type="protein sequence ID" value="BAH74714.1"/>
    <property type="molecule type" value="Genomic_DNA"/>
</dbReference>
<dbReference type="RefSeq" id="WP_015859933.1">
    <property type="nucleotide sequence ID" value="NC_012796.1"/>
</dbReference>
<dbReference type="SMR" id="C4XLX6"/>
<dbReference type="STRING" id="573370.DMR_12230"/>
<dbReference type="KEGG" id="dma:DMR_12230"/>
<dbReference type="eggNOG" id="COG0090">
    <property type="taxonomic scope" value="Bacteria"/>
</dbReference>
<dbReference type="HOGENOM" id="CLU_036235_2_1_7"/>
<dbReference type="OrthoDB" id="9778722at2"/>
<dbReference type="Proteomes" id="UP000009071">
    <property type="component" value="Chromosome"/>
</dbReference>
<dbReference type="GO" id="GO:0015934">
    <property type="term" value="C:large ribosomal subunit"/>
    <property type="evidence" value="ECO:0007669"/>
    <property type="project" value="InterPro"/>
</dbReference>
<dbReference type="GO" id="GO:0019843">
    <property type="term" value="F:rRNA binding"/>
    <property type="evidence" value="ECO:0007669"/>
    <property type="project" value="UniProtKB-UniRule"/>
</dbReference>
<dbReference type="GO" id="GO:0003735">
    <property type="term" value="F:structural constituent of ribosome"/>
    <property type="evidence" value="ECO:0007669"/>
    <property type="project" value="InterPro"/>
</dbReference>
<dbReference type="GO" id="GO:0016740">
    <property type="term" value="F:transferase activity"/>
    <property type="evidence" value="ECO:0007669"/>
    <property type="project" value="InterPro"/>
</dbReference>
<dbReference type="GO" id="GO:0002181">
    <property type="term" value="P:cytoplasmic translation"/>
    <property type="evidence" value="ECO:0007669"/>
    <property type="project" value="TreeGrafter"/>
</dbReference>
<dbReference type="FunFam" id="2.30.30.30:FF:000001">
    <property type="entry name" value="50S ribosomal protein L2"/>
    <property type="match status" value="1"/>
</dbReference>
<dbReference type="FunFam" id="2.40.50.140:FF:000003">
    <property type="entry name" value="50S ribosomal protein L2"/>
    <property type="match status" value="1"/>
</dbReference>
<dbReference type="FunFam" id="4.10.950.10:FF:000001">
    <property type="entry name" value="50S ribosomal protein L2"/>
    <property type="match status" value="1"/>
</dbReference>
<dbReference type="Gene3D" id="2.30.30.30">
    <property type="match status" value="1"/>
</dbReference>
<dbReference type="Gene3D" id="2.40.50.140">
    <property type="entry name" value="Nucleic acid-binding proteins"/>
    <property type="match status" value="1"/>
</dbReference>
<dbReference type="Gene3D" id="4.10.950.10">
    <property type="entry name" value="Ribosomal protein L2, domain 3"/>
    <property type="match status" value="1"/>
</dbReference>
<dbReference type="HAMAP" id="MF_01320_B">
    <property type="entry name" value="Ribosomal_uL2_B"/>
    <property type="match status" value="1"/>
</dbReference>
<dbReference type="InterPro" id="IPR012340">
    <property type="entry name" value="NA-bd_OB-fold"/>
</dbReference>
<dbReference type="InterPro" id="IPR014722">
    <property type="entry name" value="Rib_uL2_dom2"/>
</dbReference>
<dbReference type="InterPro" id="IPR002171">
    <property type="entry name" value="Ribosomal_uL2"/>
</dbReference>
<dbReference type="InterPro" id="IPR005880">
    <property type="entry name" value="Ribosomal_uL2_bac/org-type"/>
</dbReference>
<dbReference type="InterPro" id="IPR022669">
    <property type="entry name" value="Ribosomal_uL2_C"/>
</dbReference>
<dbReference type="InterPro" id="IPR022671">
    <property type="entry name" value="Ribosomal_uL2_CS"/>
</dbReference>
<dbReference type="InterPro" id="IPR014726">
    <property type="entry name" value="Ribosomal_uL2_dom3"/>
</dbReference>
<dbReference type="InterPro" id="IPR022666">
    <property type="entry name" value="Ribosomal_uL2_RNA-bd_dom"/>
</dbReference>
<dbReference type="InterPro" id="IPR008991">
    <property type="entry name" value="Translation_prot_SH3-like_sf"/>
</dbReference>
<dbReference type="NCBIfam" id="TIGR01171">
    <property type="entry name" value="rplB_bact"/>
    <property type="match status" value="1"/>
</dbReference>
<dbReference type="PANTHER" id="PTHR13691:SF5">
    <property type="entry name" value="LARGE RIBOSOMAL SUBUNIT PROTEIN UL2M"/>
    <property type="match status" value="1"/>
</dbReference>
<dbReference type="PANTHER" id="PTHR13691">
    <property type="entry name" value="RIBOSOMAL PROTEIN L2"/>
    <property type="match status" value="1"/>
</dbReference>
<dbReference type="Pfam" id="PF00181">
    <property type="entry name" value="Ribosomal_L2"/>
    <property type="match status" value="1"/>
</dbReference>
<dbReference type="Pfam" id="PF03947">
    <property type="entry name" value="Ribosomal_L2_C"/>
    <property type="match status" value="1"/>
</dbReference>
<dbReference type="PIRSF" id="PIRSF002158">
    <property type="entry name" value="Ribosomal_L2"/>
    <property type="match status" value="1"/>
</dbReference>
<dbReference type="SMART" id="SM01383">
    <property type="entry name" value="Ribosomal_L2"/>
    <property type="match status" value="1"/>
</dbReference>
<dbReference type="SMART" id="SM01382">
    <property type="entry name" value="Ribosomal_L2_C"/>
    <property type="match status" value="1"/>
</dbReference>
<dbReference type="SUPFAM" id="SSF50249">
    <property type="entry name" value="Nucleic acid-binding proteins"/>
    <property type="match status" value="1"/>
</dbReference>
<dbReference type="SUPFAM" id="SSF50104">
    <property type="entry name" value="Translation proteins SH3-like domain"/>
    <property type="match status" value="1"/>
</dbReference>
<dbReference type="PROSITE" id="PS00467">
    <property type="entry name" value="RIBOSOMAL_L2"/>
    <property type="match status" value="1"/>
</dbReference>
<organism>
    <name type="scientific">Solidesulfovibrio magneticus (strain ATCC 700980 / DSM 13731 / RS-1)</name>
    <name type="common">Desulfovibrio magneticus</name>
    <dbReference type="NCBI Taxonomy" id="573370"/>
    <lineage>
        <taxon>Bacteria</taxon>
        <taxon>Pseudomonadati</taxon>
        <taxon>Thermodesulfobacteriota</taxon>
        <taxon>Desulfovibrionia</taxon>
        <taxon>Desulfovibrionales</taxon>
        <taxon>Desulfovibrionaceae</taxon>
        <taxon>Solidesulfovibrio</taxon>
    </lineage>
</organism>
<gene>
    <name evidence="1" type="primary">rplB</name>
    <name type="ordered locus">DMR_12230</name>
</gene>
<name>RL2_SOLM1</name>
<accession>C4XLX6</accession>
<proteinExistence type="inferred from homology"/>
<evidence type="ECO:0000255" key="1">
    <source>
        <dbReference type="HAMAP-Rule" id="MF_01320"/>
    </source>
</evidence>
<evidence type="ECO:0000256" key="2">
    <source>
        <dbReference type="SAM" id="MobiDB-lite"/>
    </source>
</evidence>
<evidence type="ECO:0000305" key="3"/>
<keyword id="KW-0687">Ribonucleoprotein</keyword>
<keyword id="KW-0689">Ribosomal protein</keyword>
<keyword id="KW-0694">RNA-binding</keyword>
<keyword id="KW-0699">rRNA-binding</keyword>
<protein>
    <recommendedName>
        <fullName evidence="1">Large ribosomal subunit protein uL2</fullName>
    </recommendedName>
    <alternativeName>
        <fullName evidence="3">50S ribosomal protein L2</fullName>
    </alternativeName>
</protein>
<feature type="chain" id="PRO_1000214443" description="Large ribosomal subunit protein uL2">
    <location>
        <begin position="1"/>
        <end position="276"/>
    </location>
</feature>
<feature type="region of interest" description="Disordered" evidence="2">
    <location>
        <begin position="224"/>
        <end position="276"/>
    </location>
</feature>
<feature type="compositionally biased region" description="Basic residues" evidence="2">
    <location>
        <begin position="254"/>
        <end position="276"/>
    </location>
</feature>
<sequence>MSIRKLKPTSAGRRFQTVSTFEEITRSEPEKSLTEGITSSCGRNCYGRITSRRRGGGNKRLYRIIDFKRDKFGVPAKVFSIEYDPNRSARIALLHYADGEKRYILAPVGIKVGDMITAGDAADIKPGNALQLKKIPVGTLLHNIELNPGRGGQMCRAAGTYAQLVAKEGKYALLRLPSGEVRNVLSTCLATIGQVGNVMHENISIGKAGRNRWLGKRPEVRGVAMNPVDHPLGGGEGKSSGGRHPVTPWGKPTKGYKTRNKKKPSSKLIVKRRGQK</sequence>
<reference key="1">
    <citation type="journal article" date="2009" name="Genome Res.">
        <title>Whole genome sequence of Desulfovibrio magneticus strain RS-1 revealed common gene clusters in magnetotactic bacteria.</title>
        <authorList>
            <person name="Nakazawa H."/>
            <person name="Arakaki A."/>
            <person name="Narita-Yamada S."/>
            <person name="Yashiro I."/>
            <person name="Jinno K."/>
            <person name="Aoki N."/>
            <person name="Tsuruyama A."/>
            <person name="Okamura Y."/>
            <person name="Tanikawa S."/>
            <person name="Fujita N."/>
            <person name="Takeyama H."/>
            <person name="Matsunaga T."/>
        </authorList>
    </citation>
    <scope>NUCLEOTIDE SEQUENCE [LARGE SCALE GENOMIC DNA]</scope>
    <source>
        <strain>ATCC 700980 / DSM 13731 / RS-1</strain>
    </source>
</reference>
<comment type="function">
    <text evidence="1">One of the primary rRNA binding proteins. Required for association of the 30S and 50S subunits to form the 70S ribosome, for tRNA binding and peptide bond formation. It has been suggested to have peptidyltransferase activity; this is somewhat controversial. Makes several contacts with the 16S rRNA in the 70S ribosome.</text>
</comment>
<comment type="subunit">
    <text evidence="1">Part of the 50S ribosomal subunit. Forms a bridge to the 30S subunit in the 70S ribosome.</text>
</comment>
<comment type="similarity">
    <text evidence="1">Belongs to the universal ribosomal protein uL2 family.</text>
</comment>